<organism>
    <name type="scientific">Escherichia coli</name>
    <dbReference type="NCBI Taxonomy" id="562"/>
    <lineage>
        <taxon>Bacteria</taxon>
        <taxon>Pseudomonadati</taxon>
        <taxon>Pseudomonadota</taxon>
        <taxon>Gammaproteobacteria</taxon>
        <taxon>Enterobacterales</taxon>
        <taxon>Enterobacteriaceae</taxon>
        <taxon>Escherichia</taxon>
    </lineage>
</organism>
<evidence type="ECO:0000255" key="1">
    <source>
        <dbReference type="HAMAP-Rule" id="MF_02012"/>
    </source>
</evidence>
<name>ZAPA_ECOLX</name>
<feature type="chain" id="PRO_0000345642" description="Cell division protein ZapA">
    <location>
        <begin position="1"/>
        <end position="109"/>
    </location>
</feature>
<feature type="coiled-coil region" evidence="1">
    <location>
        <begin position="21"/>
        <end position="99"/>
    </location>
</feature>
<proteinExistence type="inferred from homology"/>
<sequence>MSAQPVDIQIFGRSLRVNCPPDQRDALNQAADDLNQRLQDLKERTRVTNTEQLVFIAALNISYELAQEKAKTRDYAASMEQRIRMLQQTIEQALLEQGRITEKTNQNFE</sequence>
<accession>Q1JQN5</accession>
<protein>
    <recommendedName>
        <fullName evidence="1">Cell division protein ZapA</fullName>
    </recommendedName>
    <alternativeName>
        <fullName evidence="1">Z ring-associated protein ZapA</fullName>
    </alternativeName>
</protein>
<gene>
    <name evidence="1" type="primary">zapA</name>
</gene>
<reference key="1">
    <citation type="journal article" date="2006" name="FEMS Microbiol. Lett.">
        <title>The analysis of cell division and cell wall synthesis genes reveals mutationally inactivated ftsQ and mraY in a protoplast-type L-form of Escherichia coli.</title>
        <authorList>
            <person name="Siddiqui R.A."/>
            <person name="Hoischen C."/>
            <person name="Holst O."/>
            <person name="Heinze I."/>
            <person name="Schlott B."/>
            <person name="Gumpert J."/>
            <person name="Diekmann S."/>
            <person name="Grosse F."/>
            <person name="Platzer M."/>
        </authorList>
    </citation>
    <scope>NUCLEOTIDE SEQUENCE [GENOMIC DNA]</scope>
    <source>
        <strain>LW1655F+</strain>
    </source>
</reference>
<keyword id="KW-0131">Cell cycle</keyword>
<keyword id="KW-0132">Cell division</keyword>
<keyword id="KW-0175">Coiled coil</keyword>
<keyword id="KW-0963">Cytoplasm</keyword>
<keyword id="KW-0717">Septation</keyword>
<dbReference type="EMBL" id="AY616602">
    <property type="protein sequence ID" value="AAZ80069.1"/>
    <property type="molecule type" value="Genomic_DNA"/>
</dbReference>
<dbReference type="RefSeq" id="WP_001276008.1">
    <property type="nucleotide sequence ID" value="NZ_WXZA01000006.1"/>
</dbReference>
<dbReference type="SMR" id="Q1JQN5"/>
<dbReference type="STRING" id="585034.ECIAI1_3029"/>
<dbReference type="GeneID" id="93779091"/>
<dbReference type="eggNOG" id="COG3027">
    <property type="taxonomic scope" value="Bacteria"/>
</dbReference>
<dbReference type="OMA" id="NICYELH"/>
<dbReference type="OrthoDB" id="5917174at2"/>
<dbReference type="GO" id="GO:0032153">
    <property type="term" value="C:cell division site"/>
    <property type="evidence" value="ECO:0007669"/>
    <property type="project" value="TreeGrafter"/>
</dbReference>
<dbReference type="GO" id="GO:0030428">
    <property type="term" value="C:cell septum"/>
    <property type="evidence" value="ECO:0007669"/>
    <property type="project" value="TreeGrafter"/>
</dbReference>
<dbReference type="GO" id="GO:0005829">
    <property type="term" value="C:cytosol"/>
    <property type="evidence" value="ECO:0007669"/>
    <property type="project" value="TreeGrafter"/>
</dbReference>
<dbReference type="GO" id="GO:0005886">
    <property type="term" value="C:plasma membrane"/>
    <property type="evidence" value="ECO:0007669"/>
    <property type="project" value="UniProtKB-UniRule"/>
</dbReference>
<dbReference type="GO" id="GO:0000917">
    <property type="term" value="P:division septum assembly"/>
    <property type="evidence" value="ECO:0007669"/>
    <property type="project" value="UniProtKB-KW"/>
</dbReference>
<dbReference type="GO" id="GO:0043093">
    <property type="term" value="P:FtsZ-dependent cytokinesis"/>
    <property type="evidence" value="ECO:0007669"/>
    <property type="project" value="TreeGrafter"/>
</dbReference>
<dbReference type="GO" id="GO:0000921">
    <property type="term" value="P:septin ring assembly"/>
    <property type="evidence" value="ECO:0007669"/>
    <property type="project" value="TreeGrafter"/>
</dbReference>
<dbReference type="FunFam" id="1.20.5.50:FF:000001">
    <property type="entry name" value="Cell division protein ZapA"/>
    <property type="match status" value="1"/>
</dbReference>
<dbReference type="FunFam" id="3.30.160.880:FF:000001">
    <property type="entry name" value="Cell division protein ZapA"/>
    <property type="match status" value="1"/>
</dbReference>
<dbReference type="Gene3D" id="1.20.5.50">
    <property type="match status" value="1"/>
</dbReference>
<dbReference type="Gene3D" id="3.30.160.880">
    <property type="entry name" value="Cell division protein ZapA protomer, N-terminal domain"/>
    <property type="match status" value="1"/>
</dbReference>
<dbReference type="HAMAP" id="MF_02012">
    <property type="entry name" value="ZapA_type1"/>
    <property type="match status" value="1"/>
</dbReference>
<dbReference type="InterPro" id="IPR007838">
    <property type="entry name" value="Cell_div_ZapA-like"/>
</dbReference>
<dbReference type="InterPro" id="IPR036192">
    <property type="entry name" value="Cell_div_ZapA-like_sf"/>
</dbReference>
<dbReference type="InterPro" id="IPR023771">
    <property type="entry name" value="Cell_div_ZapA_eubact"/>
</dbReference>
<dbReference type="InterPro" id="IPR042233">
    <property type="entry name" value="Cell_div_ZapA_N"/>
</dbReference>
<dbReference type="NCBIfam" id="NF008209">
    <property type="entry name" value="PRK10972.1"/>
    <property type="match status" value="1"/>
</dbReference>
<dbReference type="PANTHER" id="PTHR34981">
    <property type="entry name" value="CELL DIVISION PROTEIN ZAPA"/>
    <property type="match status" value="1"/>
</dbReference>
<dbReference type="PANTHER" id="PTHR34981:SF1">
    <property type="entry name" value="CELL DIVISION PROTEIN ZAPA"/>
    <property type="match status" value="1"/>
</dbReference>
<dbReference type="Pfam" id="PF05164">
    <property type="entry name" value="ZapA"/>
    <property type="match status" value="1"/>
</dbReference>
<dbReference type="SUPFAM" id="SSF102829">
    <property type="entry name" value="Cell division protein ZapA-like"/>
    <property type="match status" value="1"/>
</dbReference>
<comment type="function">
    <text evidence="1">Activator of cell division through the inhibition of FtsZ GTPase activity, therefore promoting FtsZ assembly into bundles of protofilaments necessary for the formation of the division Z ring. It is recruited early at mid-cell but it is not essential for cell division.</text>
</comment>
<comment type="subunit">
    <text evidence="1">Homodimer. Interacts with FtsZ.</text>
</comment>
<comment type="subcellular location">
    <subcellularLocation>
        <location evidence="1">Cytoplasm</location>
    </subcellularLocation>
    <text evidence="1">Localizes at mid-cell.</text>
</comment>
<comment type="similarity">
    <text evidence="1">Belongs to the ZapA family. Type 1 subfamily.</text>
</comment>